<sequence length="61" mass="7362">NLLQFNKMIKIMTKKNAFPFYTSYGCYCGWGGRCCFVHDCCYEKTDIYSYSWKRQICECDR</sequence>
<evidence type="ECO:0000250" key="1"/>
<evidence type="ECO:0000255" key="2">
    <source>
        <dbReference type="PROSITE-ProRule" id="PRU10035"/>
    </source>
</evidence>
<evidence type="ECO:0000255" key="3">
    <source>
        <dbReference type="PROSITE-ProRule" id="PRU10036"/>
    </source>
</evidence>
<evidence type="ECO:0000305" key="4"/>
<dbReference type="EC" id="3.1.1.4"/>
<dbReference type="GO" id="GO:0005576">
    <property type="term" value="C:extracellular region"/>
    <property type="evidence" value="ECO:0007669"/>
    <property type="project" value="UniProtKB-SubCell"/>
</dbReference>
<dbReference type="GO" id="GO:0005509">
    <property type="term" value="F:calcium ion binding"/>
    <property type="evidence" value="ECO:0007669"/>
    <property type="project" value="InterPro"/>
</dbReference>
<dbReference type="GO" id="GO:0047498">
    <property type="term" value="F:calcium-dependent phospholipase A2 activity"/>
    <property type="evidence" value="ECO:0007669"/>
    <property type="project" value="TreeGrafter"/>
</dbReference>
<dbReference type="GO" id="GO:0005543">
    <property type="term" value="F:phospholipid binding"/>
    <property type="evidence" value="ECO:0007669"/>
    <property type="project" value="TreeGrafter"/>
</dbReference>
<dbReference type="GO" id="GO:0090729">
    <property type="term" value="F:toxin activity"/>
    <property type="evidence" value="ECO:0007669"/>
    <property type="project" value="UniProtKB-KW"/>
</dbReference>
<dbReference type="GO" id="GO:0050482">
    <property type="term" value="P:arachidonate secretion"/>
    <property type="evidence" value="ECO:0007669"/>
    <property type="project" value="InterPro"/>
</dbReference>
<dbReference type="GO" id="GO:0016042">
    <property type="term" value="P:lipid catabolic process"/>
    <property type="evidence" value="ECO:0007669"/>
    <property type="project" value="UniProtKB-KW"/>
</dbReference>
<dbReference type="GO" id="GO:0006644">
    <property type="term" value="P:phospholipid metabolic process"/>
    <property type="evidence" value="ECO:0007669"/>
    <property type="project" value="InterPro"/>
</dbReference>
<dbReference type="Gene3D" id="1.20.90.10">
    <property type="entry name" value="Phospholipase A2 domain"/>
    <property type="match status" value="1"/>
</dbReference>
<dbReference type="InterPro" id="IPR001211">
    <property type="entry name" value="PLipase_A2"/>
</dbReference>
<dbReference type="InterPro" id="IPR016090">
    <property type="entry name" value="PLipase_A2_dom"/>
</dbReference>
<dbReference type="InterPro" id="IPR036444">
    <property type="entry name" value="PLipase_A2_dom_sf"/>
</dbReference>
<dbReference type="InterPro" id="IPR033113">
    <property type="entry name" value="PLipase_A2_His_AS"/>
</dbReference>
<dbReference type="PANTHER" id="PTHR11716:SF100">
    <property type="entry name" value="PHOSPHOLIPASE A2"/>
    <property type="match status" value="1"/>
</dbReference>
<dbReference type="PANTHER" id="PTHR11716">
    <property type="entry name" value="PHOSPHOLIPASE A2 FAMILY MEMBER"/>
    <property type="match status" value="1"/>
</dbReference>
<dbReference type="Pfam" id="PF00068">
    <property type="entry name" value="Phospholip_A2_1"/>
    <property type="match status" value="1"/>
</dbReference>
<dbReference type="PRINTS" id="PR00389">
    <property type="entry name" value="PHPHLIPASEA2"/>
</dbReference>
<dbReference type="SMART" id="SM00085">
    <property type="entry name" value="PA2c"/>
    <property type="match status" value="1"/>
</dbReference>
<dbReference type="SUPFAM" id="SSF48619">
    <property type="entry name" value="Phospholipase A2, PLA2"/>
    <property type="match status" value="1"/>
</dbReference>
<dbReference type="PROSITE" id="PS00118">
    <property type="entry name" value="PA2_HIS"/>
    <property type="match status" value="1"/>
</dbReference>
<keyword id="KW-0106">Calcium</keyword>
<keyword id="KW-0903">Direct protein sequencing</keyword>
<keyword id="KW-1015">Disulfide bond</keyword>
<keyword id="KW-0378">Hydrolase</keyword>
<keyword id="KW-0442">Lipid degradation</keyword>
<keyword id="KW-0443">Lipid metabolism</keyword>
<keyword id="KW-0479">Metal-binding</keyword>
<keyword id="KW-0964">Secreted</keyword>
<keyword id="KW-0800">Toxin</keyword>
<proteinExistence type="evidence at protein level"/>
<accession>P0CV89</accession>
<reference key="1">
    <citation type="journal article" date="2009" name="J. Proteome Res.">
        <title>Exploring the venom proteome of the western diamondback rattlesnake, Crotalus atrox, via snake venomics and combinatorial peptide ligand library approaches.</title>
        <authorList>
            <person name="Calvete J.J."/>
            <person name="Fasoli E."/>
            <person name="Sanz L."/>
            <person name="Boschetti E."/>
            <person name="Righetti P.G."/>
        </authorList>
    </citation>
    <scope>PROTEIN SEQUENCE</scope>
    <scope>IDENTIFICATION BY MASS SPECTROMETRY</scope>
    <source>
        <tissue>Venom</tissue>
    </source>
</reference>
<comment type="function">
    <text evidence="1">Snake venom phospholipase A2 (PLA2) that displays edema-inducing activities. PLA2 catalyzes the calcium-dependent hydrolysis of the 2-acyl groups in 3-sn-phosphoglycerides (By similarity).</text>
</comment>
<comment type="catalytic activity">
    <reaction evidence="2 3">
        <text>a 1,2-diacyl-sn-glycero-3-phosphocholine + H2O = a 1-acyl-sn-glycero-3-phosphocholine + a fatty acid + H(+)</text>
        <dbReference type="Rhea" id="RHEA:15801"/>
        <dbReference type="ChEBI" id="CHEBI:15377"/>
        <dbReference type="ChEBI" id="CHEBI:15378"/>
        <dbReference type="ChEBI" id="CHEBI:28868"/>
        <dbReference type="ChEBI" id="CHEBI:57643"/>
        <dbReference type="ChEBI" id="CHEBI:58168"/>
        <dbReference type="EC" id="3.1.1.4"/>
    </reaction>
</comment>
<comment type="cofactor">
    <cofactor evidence="1">
        <name>Ca(2+)</name>
        <dbReference type="ChEBI" id="CHEBI:29108"/>
    </cofactor>
    <text evidence="1">Binds 1 Ca(2+) ion per subunit.</text>
</comment>
<comment type="subunit">
    <text evidence="1">Homodimer.</text>
</comment>
<comment type="subcellular location">
    <subcellularLocation>
        <location>Secreted</location>
    </subcellularLocation>
</comment>
<comment type="tissue specificity">
    <text>Expressed by the venom gland.</text>
</comment>
<comment type="similarity">
    <text evidence="4">Belongs to the phospholipase A2 family. Group II subfamily. D49 sub-subfamily.</text>
</comment>
<name>PA23_CROAT</name>
<feature type="chain" id="PRO_0000407587" description="Phospholipase A2">
    <location>
        <begin position="1"/>
        <end position="61" status="greater than"/>
    </location>
</feature>
<feature type="active site" evidence="1">
    <location>
        <position position="38"/>
    </location>
</feature>
<feature type="active site" evidence="1">
    <location>
        <position position="60"/>
    </location>
</feature>
<feature type="binding site" evidence="1">
    <location>
        <position position="27"/>
    </location>
    <ligand>
        <name>Ca(2+)</name>
        <dbReference type="ChEBI" id="CHEBI:29108"/>
    </ligand>
</feature>
<feature type="binding site" evidence="1">
    <location>
        <position position="29"/>
    </location>
    <ligand>
        <name>Ca(2+)</name>
        <dbReference type="ChEBI" id="CHEBI:29108"/>
    </ligand>
</feature>
<feature type="binding site" evidence="1">
    <location>
        <position position="31"/>
    </location>
    <ligand>
        <name>Ca(2+)</name>
        <dbReference type="ChEBI" id="CHEBI:29108"/>
    </ligand>
</feature>
<feature type="binding site" evidence="1">
    <location>
        <position position="39"/>
    </location>
    <ligand>
        <name>Ca(2+)</name>
        <dbReference type="ChEBI" id="CHEBI:29108"/>
    </ligand>
</feature>
<feature type="disulfide bond" evidence="1">
    <location>
        <begin position="28"/>
        <end position="35"/>
    </location>
</feature>
<feature type="disulfide bond" evidence="1">
    <location>
        <begin position="41"/>
        <end position="59"/>
    </location>
</feature>
<feature type="non-consecutive residues" evidence="4">
    <location>
        <begin position="33"/>
        <end position="34"/>
    </location>
</feature>
<feature type="non-consecutive residues" evidence="4">
    <location>
        <begin position="43"/>
        <end position="44"/>
    </location>
</feature>
<feature type="non-consecutive residues" evidence="4">
    <location>
        <begin position="53"/>
        <end position="54"/>
    </location>
</feature>
<feature type="non-terminal residue">
    <location>
        <position position="61"/>
    </location>
</feature>
<organism>
    <name type="scientific">Crotalus atrox</name>
    <name type="common">Western diamondback rattlesnake</name>
    <dbReference type="NCBI Taxonomy" id="8730"/>
    <lineage>
        <taxon>Eukaryota</taxon>
        <taxon>Metazoa</taxon>
        <taxon>Chordata</taxon>
        <taxon>Craniata</taxon>
        <taxon>Vertebrata</taxon>
        <taxon>Euteleostomi</taxon>
        <taxon>Lepidosauria</taxon>
        <taxon>Squamata</taxon>
        <taxon>Bifurcata</taxon>
        <taxon>Unidentata</taxon>
        <taxon>Episquamata</taxon>
        <taxon>Toxicofera</taxon>
        <taxon>Serpentes</taxon>
        <taxon>Colubroidea</taxon>
        <taxon>Viperidae</taxon>
        <taxon>Crotalinae</taxon>
        <taxon>Crotalus</taxon>
    </lineage>
</organism>
<protein>
    <recommendedName>
        <fullName>Phospholipase A2</fullName>
        <shortName>svPLA2</shortName>
        <ecNumber>3.1.1.4</ecNumber>
    </recommendedName>
    <alternativeName>
        <fullName>Phosphatidylcholine 2-acylhydrolase</fullName>
    </alternativeName>
</protein>